<gene>
    <name evidence="1" type="primary">nuoB</name>
    <name type="ordered locus">CJJ81176_1563</name>
</gene>
<organism>
    <name type="scientific">Campylobacter jejuni subsp. jejuni serotype O:23/36 (strain 81-176)</name>
    <dbReference type="NCBI Taxonomy" id="354242"/>
    <lineage>
        <taxon>Bacteria</taxon>
        <taxon>Pseudomonadati</taxon>
        <taxon>Campylobacterota</taxon>
        <taxon>Epsilonproteobacteria</taxon>
        <taxon>Campylobacterales</taxon>
        <taxon>Campylobacteraceae</taxon>
        <taxon>Campylobacter</taxon>
    </lineage>
</organism>
<comment type="function">
    <text evidence="1">NDH-1 shuttles electrons from NADH, via FMN and iron-sulfur (Fe-S) centers, to quinones in the respiratory chain. The immediate electron acceptor for the enzyme in this species is believed to be ubiquinone. Couples the redox reaction to proton translocation (for every two electrons transferred, four hydrogen ions are translocated across the cytoplasmic membrane), and thus conserves the redox energy in a proton gradient.</text>
</comment>
<comment type="catalytic activity">
    <reaction evidence="1">
        <text>a quinone + NADH + 5 H(+)(in) = a quinol + NAD(+) + 4 H(+)(out)</text>
        <dbReference type="Rhea" id="RHEA:57888"/>
        <dbReference type="ChEBI" id="CHEBI:15378"/>
        <dbReference type="ChEBI" id="CHEBI:24646"/>
        <dbReference type="ChEBI" id="CHEBI:57540"/>
        <dbReference type="ChEBI" id="CHEBI:57945"/>
        <dbReference type="ChEBI" id="CHEBI:132124"/>
    </reaction>
</comment>
<comment type="cofactor">
    <cofactor evidence="1">
        <name>[4Fe-4S] cluster</name>
        <dbReference type="ChEBI" id="CHEBI:49883"/>
    </cofactor>
    <text evidence="1">Binds 1 [4Fe-4S] cluster.</text>
</comment>
<comment type="subunit">
    <text evidence="1">NDH-1 is composed of 14 different subunits. Subunits NuoB, C, D, E, F, and G constitute the peripheral sector of the complex.</text>
</comment>
<comment type="subcellular location">
    <subcellularLocation>
        <location evidence="1">Cell inner membrane</location>
        <topology evidence="1">Peripheral membrane protein</topology>
        <orientation evidence="1">Cytoplasmic side</orientation>
    </subcellularLocation>
</comment>
<comment type="similarity">
    <text evidence="1">Belongs to the complex I 20 kDa subunit family.</text>
</comment>
<protein>
    <recommendedName>
        <fullName evidence="1">NADH-quinone oxidoreductase subunit B</fullName>
        <ecNumber evidence="1">7.1.1.-</ecNumber>
    </recommendedName>
    <alternativeName>
        <fullName evidence="1">NADH dehydrogenase I subunit B</fullName>
    </alternativeName>
    <alternativeName>
        <fullName evidence="1">NDH-1 subunit B</fullName>
    </alternativeName>
</protein>
<reference key="1">
    <citation type="submission" date="2006-12" db="EMBL/GenBank/DDBJ databases">
        <authorList>
            <person name="Fouts D.E."/>
            <person name="Nelson K.E."/>
            <person name="Sebastian Y."/>
        </authorList>
    </citation>
    <scope>NUCLEOTIDE SEQUENCE [LARGE SCALE GENOMIC DNA]</scope>
    <source>
        <strain>81-176</strain>
    </source>
</reference>
<dbReference type="EC" id="7.1.1.-" evidence="1"/>
<dbReference type="EMBL" id="CP000538">
    <property type="protein sequence ID" value="EAQ72758.1"/>
    <property type="molecule type" value="Genomic_DNA"/>
</dbReference>
<dbReference type="RefSeq" id="WP_002851253.1">
    <property type="nucleotide sequence ID" value="NC_008787.1"/>
</dbReference>
<dbReference type="SMR" id="A1W1H7"/>
<dbReference type="KEGG" id="cjj:CJJ81176_1563"/>
<dbReference type="eggNOG" id="COG0377">
    <property type="taxonomic scope" value="Bacteria"/>
</dbReference>
<dbReference type="HOGENOM" id="CLU_055737_7_3_7"/>
<dbReference type="Proteomes" id="UP000000646">
    <property type="component" value="Chromosome"/>
</dbReference>
<dbReference type="GO" id="GO:0005886">
    <property type="term" value="C:plasma membrane"/>
    <property type="evidence" value="ECO:0007669"/>
    <property type="project" value="UniProtKB-SubCell"/>
</dbReference>
<dbReference type="GO" id="GO:0045271">
    <property type="term" value="C:respiratory chain complex I"/>
    <property type="evidence" value="ECO:0007669"/>
    <property type="project" value="TreeGrafter"/>
</dbReference>
<dbReference type="GO" id="GO:0051539">
    <property type="term" value="F:4 iron, 4 sulfur cluster binding"/>
    <property type="evidence" value="ECO:0007669"/>
    <property type="project" value="UniProtKB-KW"/>
</dbReference>
<dbReference type="GO" id="GO:0005506">
    <property type="term" value="F:iron ion binding"/>
    <property type="evidence" value="ECO:0007669"/>
    <property type="project" value="UniProtKB-UniRule"/>
</dbReference>
<dbReference type="GO" id="GO:0008137">
    <property type="term" value="F:NADH dehydrogenase (ubiquinone) activity"/>
    <property type="evidence" value="ECO:0007669"/>
    <property type="project" value="InterPro"/>
</dbReference>
<dbReference type="GO" id="GO:0050136">
    <property type="term" value="F:NADH:ubiquinone reductase (non-electrogenic) activity"/>
    <property type="evidence" value="ECO:0007669"/>
    <property type="project" value="UniProtKB-UniRule"/>
</dbReference>
<dbReference type="GO" id="GO:0048038">
    <property type="term" value="F:quinone binding"/>
    <property type="evidence" value="ECO:0007669"/>
    <property type="project" value="UniProtKB-KW"/>
</dbReference>
<dbReference type="GO" id="GO:0009060">
    <property type="term" value="P:aerobic respiration"/>
    <property type="evidence" value="ECO:0007669"/>
    <property type="project" value="TreeGrafter"/>
</dbReference>
<dbReference type="GO" id="GO:0015990">
    <property type="term" value="P:electron transport coupled proton transport"/>
    <property type="evidence" value="ECO:0007669"/>
    <property type="project" value="TreeGrafter"/>
</dbReference>
<dbReference type="FunFam" id="3.40.50.12280:FF:000002">
    <property type="entry name" value="NADH-quinone oxidoreductase subunit B"/>
    <property type="match status" value="1"/>
</dbReference>
<dbReference type="Gene3D" id="3.40.50.12280">
    <property type="match status" value="1"/>
</dbReference>
<dbReference type="HAMAP" id="MF_01356">
    <property type="entry name" value="NDH1_NuoB"/>
    <property type="match status" value="1"/>
</dbReference>
<dbReference type="InterPro" id="IPR006137">
    <property type="entry name" value="NADH_UbQ_OxRdtase-like_20kDa"/>
</dbReference>
<dbReference type="InterPro" id="IPR006138">
    <property type="entry name" value="NADH_UQ_OxRdtase_20Kd_su"/>
</dbReference>
<dbReference type="NCBIfam" id="TIGR01957">
    <property type="entry name" value="nuoB_fam"/>
    <property type="match status" value="1"/>
</dbReference>
<dbReference type="NCBIfam" id="NF005012">
    <property type="entry name" value="PRK06411.1"/>
    <property type="match status" value="1"/>
</dbReference>
<dbReference type="PANTHER" id="PTHR11995">
    <property type="entry name" value="NADH DEHYDROGENASE"/>
    <property type="match status" value="1"/>
</dbReference>
<dbReference type="PANTHER" id="PTHR11995:SF14">
    <property type="entry name" value="NADH DEHYDROGENASE [UBIQUINONE] IRON-SULFUR PROTEIN 7, MITOCHONDRIAL"/>
    <property type="match status" value="1"/>
</dbReference>
<dbReference type="Pfam" id="PF01058">
    <property type="entry name" value="Oxidored_q6"/>
    <property type="match status" value="1"/>
</dbReference>
<dbReference type="SUPFAM" id="SSF56770">
    <property type="entry name" value="HydA/Nqo6-like"/>
    <property type="match status" value="1"/>
</dbReference>
<keyword id="KW-0004">4Fe-4S</keyword>
<keyword id="KW-0997">Cell inner membrane</keyword>
<keyword id="KW-1003">Cell membrane</keyword>
<keyword id="KW-0408">Iron</keyword>
<keyword id="KW-0411">Iron-sulfur</keyword>
<keyword id="KW-0472">Membrane</keyword>
<keyword id="KW-0479">Metal-binding</keyword>
<keyword id="KW-0520">NAD</keyword>
<keyword id="KW-0874">Quinone</keyword>
<keyword id="KW-1278">Translocase</keyword>
<keyword id="KW-0813">Transport</keyword>
<keyword id="KW-0830">Ubiquinone</keyword>
<feature type="chain" id="PRO_0000376163" description="NADH-quinone oxidoreductase subunit B">
    <location>
        <begin position="1"/>
        <end position="167"/>
    </location>
</feature>
<feature type="binding site" evidence="1">
    <location>
        <position position="40"/>
    </location>
    <ligand>
        <name>[4Fe-4S] cluster</name>
        <dbReference type="ChEBI" id="CHEBI:49883"/>
    </ligand>
</feature>
<feature type="binding site" evidence="1">
    <location>
        <position position="41"/>
    </location>
    <ligand>
        <name>[4Fe-4S] cluster</name>
        <dbReference type="ChEBI" id="CHEBI:49883"/>
    </ligand>
</feature>
<feature type="binding site" evidence="1">
    <location>
        <position position="105"/>
    </location>
    <ligand>
        <name>[4Fe-4S] cluster</name>
        <dbReference type="ChEBI" id="CHEBI:49883"/>
    </ligand>
</feature>
<feature type="binding site" evidence="1">
    <location>
        <position position="134"/>
    </location>
    <ligand>
        <name>[4Fe-4S] cluster</name>
        <dbReference type="ChEBI" id="CHEBI:49883"/>
    </ligand>
</feature>
<proteinExistence type="inferred from homology"/>
<sequence length="167" mass="18682">MAEHQVNYASGLPVVLTSVDKLVQWGRSNSLWALSYGLACCAIEMMAAGGSRYDFDRFGTIFRASPRHSEVMIIAGTLCKKHAEFTRRLYDQMPDPKWVISMGSCANTGGMFNTYSTVQGVDRIIPVDIYVPGCAPRPESFQFALMILQKKIRKEKASRKIAPKRLI</sequence>
<name>NUOB_CAMJJ</name>
<accession>A1W1H7</accession>
<evidence type="ECO:0000255" key="1">
    <source>
        <dbReference type="HAMAP-Rule" id="MF_01356"/>
    </source>
</evidence>